<comment type="catalytic activity">
    <reaction evidence="1">
        <text>tRNA(Gly) + glycine + ATP = glycyl-tRNA(Gly) + AMP + diphosphate</text>
        <dbReference type="Rhea" id="RHEA:16013"/>
        <dbReference type="Rhea" id="RHEA-COMP:9664"/>
        <dbReference type="Rhea" id="RHEA-COMP:9683"/>
        <dbReference type="ChEBI" id="CHEBI:30616"/>
        <dbReference type="ChEBI" id="CHEBI:33019"/>
        <dbReference type="ChEBI" id="CHEBI:57305"/>
        <dbReference type="ChEBI" id="CHEBI:78442"/>
        <dbReference type="ChEBI" id="CHEBI:78522"/>
        <dbReference type="ChEBI" id="CHEBI:456215"/>
        <dbReference type="EC" id="6.1.1.14"/>
    </reaction>
</comment>
<comment type="subunit">
    <text evidence="1">Tetramer of two alpha and two beta subunits.</text>
</comment>
<comment type="subcellular location">
    <subcellularLocation>
        <location evidence="1">Cytoplasm</location>
    </subcellularLocation>
</comment>
<comment type="similarity">
    <text evidence="1">Belongs to the class-II aminoacyl-tRNA synthetase family.</text>
</comment>
<keyword id="KW-0030">Aminoacyl-tRNA synthetase</keyword>
<keyword id="KW-0067">ATP-binding</keyword>
<keyword id="KW-0963">Cytoplasm</keyword>
<keyword id="KW-0436">Ligase</keyword>
<keyword id="KW-0547">Nucleotide-binding</keyword>
<keyword id="KW-0648">Protein biosynthesis</keyword>
<keyword id="KW-1185">Reference proteome</keyword>
<proteinExistence type="inferred from homology"/>
<sequence length="687" mass="74451">MTTQTLLIELLTEELPPKALNNLGNHFAASVAEGLEKAQLVDGAAEFTAYASPRRLAVQVKNVKAVQADQKIVKKGPAVANAVKDGTPTKALEGFARGAGAKIEDLTIVHDGRQDVYAYEYVQTGRPLGGLLENIINQAVKKLPIPKVMRWGSSTFTFVRPVHGLIVLHGGDVVNVSVLGLQSGNQTLGHRFLSDGEIIIENADSYAAQMRGQGKVVASFAGRKAAIQTALEGQARRLNATVAADEALLDEVTALVEWPVVLEAGFEEHFLAVPQECLILTMQQNQKYFPLLDQNGKLMNRFLLVSNLQTEDPSHIIRGNERVLRARLSDAEFFYKQDQKATLESRLPKLANVVYHNKIGSQAERIERLQSIAAHIAKALGADAAAAERAARLAKADLVTEMVGEFPELQGTMGKYYARLDGETEEIAEAIEQHYQPRFAGDKLPESKIAAAVALADKLETLVGIWGIGLIPTGDKDPYALRRAALGILRMLMQYGLDVNELIQTAFDSFPQGLLNEKTPSETADFMQARLAVLLQNDYPQDIVAAVLAKQPRRLDDLTAKLQAVAVFKQLPEAAALAAANKRVQNLLKKADAELGAVNESLLQQDEEKALYAAAQGLQPKIAAAVAEGNFQTALSELASVKPQVDAFFDGVMVMAEDAAVKQNRLNLLNRLAGQMNAVADIALLGE</sequence>
<protein>
    <recommendedName>
        <fullName evidence="1">Glycine--tRNA ligase beta subunit</fullName>
        <ecNumber evidence="1">6.1.1.14</ecNumber>
    </recommendedName>
    <alternativeName>
        <fullName evidence="1">Glycyl-tRNA synthetase beta subunit</fullName>
        <shortName evidence="1">GlyRS</shortName>
    </alternativeName>
</protein>
<organism>
    <name type="scientific">Neisseria gonorrhoeae (strain ATCC 700825 / FA 1090)</name>
    <dbReference type="NCBI Taxonomy" id="242231"/>
    <lineage>
        <taxon>Bacteria</taxon>
        <taxon>Pseudomonadati</taxon>
        <taxon>Pseudomonadota</taxon>
        <taxon>Betaproteobacteria</taxon>
        <taxon>Neisseriales</taxon>
        <taxon>Neisseriaceae</taxon>
        <taxon>Neisseria</taxon>
    </lineage>
</organism>
<gene>
    <name evidence="1" type="primary">glyS</name>
    <name type="ordered locus">NGO_2154</name>
</gene>
<accession>Q5F4Y7</accession>
<name>SYGB_NEIG1</name>
<evidence type="ECO:0000255" key="1">
    <source>
        <dbReference type="HAMAP-Rule" id="MF_00255"/>
    </source>
</evidence>
<dbReference type="EC" id="6.1.1.14" evidence="1"/>
<dbReference type="EMBL" id="AE004969">
    <property type="protein sequence ID" value="AAW90750.1"/>
    <property type="molecule type" value="Genomic_DNA"/>
</dbReference>
<dbReference type="RefSeq" id="WP_010951416.1">
    <property type="nucleotide sequence ID" value="NC_002946.2"/>
</dbReference>
<dbReference type="RefSeq" id="YP_209162.1">
    <property type="nucleotide sequence ID" value="NC_002946.2"/>
</dbReference>
<dbReference type="SMR" id="Q5F4Y7"/>
<dbReference type="STRING" id="242231.NGO_2154"/>
<dbReference type="KEGG" id="ngo:NGO_2154"/>
<dbReference type="PATRIC" id="fig|242231.10.peg.2602"/>
<dbReference type="HOGENOM" id="CLU_007220_2_2_4"/>
<dbReference type="Proteomes" id="UP000000535">
    <property type="component" value="Chromosome"/>
</dbReference>
<dbReference type="GO" id="GO:0005829">
    <property type="term" value="C:cytosol"/>
    <property type="evidence" value="ECO:0007669"/>
    <property type="project" value="TreeGrafter"/>
</dbReference>
<dbReference type="GO" id="GO:0004814">
    <property type="term" value="F:arginine-tRNA ligase activity"/>
    <property type="evidence" value="ECO:0007669"/>
    <property type="project" value="InterPro"/>
</dbReference>
<dbReference type="GO" id="GO:0005524">
    <property type="term" value="F:ATP binding"/>
    <property type="evidence" value="ECO:0007669"/>
    <property type="project" value="UniProtKB-UniRule"/>
</dbReference>
<dbReference type="GO" id="GO:0004820">
    <property type="term" value="F:glycine-tRNA ligase activity"/>
    <property type="evidence" value="ECO:0007669"/>
    <property type="project" value="UniProtKB-UniRule"/>
</dbReference>
<dbReference type="GO" id="GO:0006420">
    <property type="term" value="P:arginyl-tRNA aminoacylation"/>
    <property type="evidence" value="ECO:0007669"/>
    <property type="project" value="InterPro"/>
</dbReference>
<dbReference type="GO" id="GO:0006426">
    <property type="term" value="P:glycyl-tRNA aminoacylation"/>
    <property type="evidence" value="ECO:0007669"/>
    <property type="project" value="UniProtKB-UniRule"/>
</dbReference>
<dbReference type="HAMAP" id="MF_00255">
    <property type="entry name" value="Gly_tRNA_synth_beta"/>
    <property type="match status" value="1"/>
</dbReference>
<dbReference type="InterPro" id="IPR008909">
    <property type="entry name" value="DALR_anticod-bd"/>
</dbReference>
<dbReference type="InterPro" id="IPR015944">
    <property type="entry name" value="Gly-tRNA-synth_bsu"/>
</dbReference>
<dbReference type="InterPro" id="IPR006194">
    <property type="entry name" value="Gly-tRNA-synth_heterodimer"/>
</dbReference>
<dbReference type="NCBIfam" id="TIGR00211">
    <property type="entry name" value="glyS"/>
    <property type="match status" value="1"/>
</dbReference>
<dbReference type="PANTHER" id="PTHR30075:SF2">
    <property type="entry name" value="GLYCINE--TRNA LIGASE, CHLOROPLASTIC_MITOCHONDRIAL 2"/>
    <property type="match status" value="1"/>
</dbReference>
<dbReference type="PANTHER" id="PTHR30075">
    <property type="entry name" value="GLYCYL-TRNA SYNTHETASE"/>
    <property type="match status" value="1"/>
</dbReference>
<dbReference type="Pfam" id="PF05746">
    <property type="entry name" value="DALR_1"/>
    <property type="match status" value="1"/>
</dbReference>
<dbReference type="Pfam" id="PF02092">
    <property type="entry name" value="tRNA_synt_2f"/>
    <property type="match status" value="1"/>
</dbReference>
<dbReference type="PRINTS" id="PR01045">
    <property type="entry name" value="TRNASYNTHGB"/>
</dbReference>
<dbReference type="SUPFAM" id="SSF109604">
    <property type="entry name" value="HD-domain/PDEase-like"/>
    <property type="match status" value="1"/>
</dbReference>
<dbReference type="PROSITE" id="PS50861">
    <property type="entry name" value="AA_TRNA_LIGASE_II_GLYAB"/>
    <property type="match status" value="1"/>
</dbReference>
<reference key="1">
    <citation type="submission" date="2003-03" db="EMBL/GenBank/DDBJ databases">
        <title>The complete genome sequence of Neisseria gonorrhoeae.</title>
        <authorList>
            <person name="Lewis L.A."/>
            <person name="Gillaspy A.F."/>
            <person name="McLaughlin R.E."/>
            <person name="Gipson M."/>
            <person name="Ducey T.F."/>
            <person name="Ownbey T."/>
            <person name="Hartman K."/>
            <person name="Nydick C."/>
            <person name="Carson M.B."/>
            <person name="Vaughn J."/>
            <person name="Thomson C."/>
            <person name="Song L."/>
            <person name="Lin S."/>
            <person name="Yuan X."/>
            <person name="Najar F."/>
            <person name="Zhan M."/>
            <person name="Ren Q."/>
            <person name="Zhu H."/>
            <person name="Qi S."/>
            <person name="Kenton S.M."/>
            <person name="Lai H."/>
            <person name="White J.D."/>
            <person name="Clifton S."/>
            <person name="Roe B.A."/>
            <person name="Dyer D.W."/>
        </authorList>
    </citation>
    <scope>NUCLEOTIDE SEQUENCE [LARGE SCALE GENOMIC DNA]</scope>
    <source>
        <strain>ATCC 700825 / FA 1090</strain>
    </source>
</reference>
<feature type="chain" id="PRO_1000101306" description="Glycine--tRNA ligase beta subunit">
    <location>
        <begin position="1"/>
        <end position="687"/>
    </location>
</feature>